<sequence length="239" mass="27014">MVIKAQSPAGFAEEYIIESIWNNRFPPGTILPAERELSELIGVTRTTLREVLQRLARDGWLTIQHGKPTKVNNFWETSGLNILETLARLDHESVPQLIDNLLSVRTNISTIFIRTAFRQHPDKAQEVLAAANEVADHADAFAELDYSIFRGLAFASGNPIYGLIINGMKGLYTRTGRHYFANPEARSLALGFYHKLSELCRQGAHDQVYETVRRYGHESGEIWHRMQKNLPGDLSIQGQ</sequence>
<dbReference type="EMBL" id="CU928158">
    <property type="protein sequence ID" value="CAQ89283.1"/>
    <property type="molecule type" value="Genomic_DNA"/>
</dbReference>
<dbReference type="RefSeq" id="WP_002431510.1">
    <property type="nucleotide sequence ID" value="NC_011740.1"/>
</dbReference>
<dbReference type="SMR" id="B7LSJ7"/>
<dbReference type="GeneID" id="75057195"/>
<dbReference type="KEGG" id="efe:EFER_1768"/>
<dbReference type="HOGENOM" id="CLU_017584_9_4_6"/>
<dbReference type="OrthoDB" id="5683977at2"/>
<dbReference type="Proteomes" id="UP000000745">
    <property type="component" value="Chromosome"/>
</dbReference>
<dbReference type="GO" id="GO:0005737">
    <property type="term" value="C:cytoplasm"/>
    <property type="evidence" value="ECO:0007669"/>
    <property type="project" value="UniProtKB-SubCell"/>
</dbReference>
<dbReference type="GO" id="GO:0003677">
    <property type="term" value="F:DNA binding"/>
    <property type="evidence" value="ECO:0007669"/>
    <property type="project" value="UniProtKB-KW"/>
</dbReference>
<dbReference type="GO" id="GO:0003700">
    <property type="term" value="F:DNA-binding transcription factor activity"/>
    <property type="evidence" value="ECO:0007669"/>
    <property type="project" value="UniProtKB-UniRule"/>
</dbReference>
<dbReference type="GO" id="GO:0000062">
    <property type="term" value="F:fatty-acyl-CoA binding"/>
    <property type="evidence" value="ECO:0007669"/>
    <property type="project" value="InterPro"/>
</dbReference>
<dbReference type="GO" id="GO:0006631">
    <property type="term" value="P:fatty acid metabolic process"/>
    <property type="evidence" value="ECO:0007669"/>
    <property type="project" value="UniProtKB-KW"/>
</dbReference>
<dbReference type="GO" id="GO:0019217">
    <property type="term" value="P:regulation of fatty acid metabolic process"/>
    <property type="evidence" value="ECO:0007669"/>
    <property type="project" value="UniProtKB-UniRule"/>
</dbReference>
<dbReference type="CDD" id="cd07377">
    <property type="entry name" value="WHTH_GntR"/>
    <property type="match status" value="1"/>
</dbReference>
<dbReference type="FunFam" id="1.10.10.10:FF:000036">
    <property type="entry name" value="Fatty acid metabolism regulator protein"/>
    <property type="match status" value="1"/>
</dbReference>
<dbReference type="FunFam" id="1.20.120.530:FF:000003">
    <property type="entry name" value="Fatty acid metabolism regulator protein"/>
    <property type="match status" value="1"/>
</dbReference>
<dbReference type="Gene3D" id="1.20.120.530">
    <property type="entry name" value="GntR ligand-binding domain-like"/>
    <property type="match status" value="1"/>
</dbReference>
<dbReference type="Gene3D" id="1.10.10.10">
    <property type="entry name" value="Winged helix-like DNA-binding domain superfamily/Winged helix DNA-binding domain"/>
    <property type="match status" value="1"/>
</dbReference>
<dbReference type="HAMAP" id="MF_00696">
    <property type="entry name" value="HTH_FadR"/>
    <property type="match status" value="1"/>
</dbReference>
<dbReference type="InterPro" id="IPR014178">
    <property type="entry name" value="FA-response_TF_FadR"/>
</dbReference>
<dbReference type="InterPro" id="IPR028374">
    <property type="entry name" value="FadR_C"/>
</dbReference>
<dbReference type="InterPro" id="IPR008920">
    <property type="entry name" value="TF_FadR/GntR_C"/>
</dbReference>
<dbReference type="InterPro" id="IPR000524">
    <property type="entry name" value="Tscrpt_reg_HTH_GntR"/>
</dbReference>
<dbReference type="InterPro" id="IPR036388">
    <property type="entry name" value="WH-like_DNA-bd_sf"/>
</dbReference>
<dbReference type="InterPro" id="IPR036390">
    <property type="entry name" value="WH_DNA-bd_sf"/>
</dbReference>
<dbReference type="NCBIfam" id="TIGR02812">
    <property type="entry name" value="fadR_gamma"/>
    <property type="match status" value="1"/>
</dbReference>
<dbReference type="NCBIfam" id="NF003444">
    <property type="entry name" value="PRK04984.1"/>
    <property type="match status" value="1"/>
</dbReference>
<dbReference type="PANTHER" id="PTHR43537:SF52">
    <property type="entry name" value="FATTY ACID METABOLISM REGULATOR PROTEIN"/>
    <property type="match status" value="1"/>
</dbReference>
<dbReference type="PANTHER" id="PTHR43537">
    <property type="entry name" value="TRANSCRIPTIONAL REGULATOR, GNTR FAMILY"/>
    <property type="match status" value="1"/>
</dbReference>
<dbReference type="Pfam" id="PF07840">
    <property type="entry name" value="FadR_C"/>
    <property type="match status" value="1"/>
</dbReference>
<dbReference type="Pfam" id="PF00392">
    <property type="entry name" value="GntR"/>
    <property type="match status" value="1"/>
</dbReference>
<dbReference type="PRINTS" id="PR00035">
    <property type="entry name" value="HTHGNTR"/>
</dbReference>
<dbReference type="SMART" id="SM00345">
    <property type="entry name" value="HTH_GNTR"/>
    <property type="match status" value="1"/>
</dbReference>
<dbReference type="SUPFAM" id="SSF48008">
    <property type="entry name" value="GntR ligand-binding domain-like"/>
    <property type="match status" value="1"/>
</dbReference>
<dbReference type="SUPFAM" id="SSF46785">
    <property type="entry name" value="Winged helix' DNA-binding domain"/>
    <property type="match status" value="1"/>
</dbReference>
<dbReference type="PROSITE" id="PS50949">
    <property type="entry name" value="HTH_GNTR"/>
    <property type="match status" value="1"/>
</dbReference>
<keyword id="KW-0010">Activator</keyword>
<keyword id="KW-0963">Cytoplasm</keyword>
<keyword id="KW-0238">DNA-binding</keyword>
<keyword id="KW-0276">Fatty acid metabolism</keyword>
<keyword id="KW-0443">Lipid metabolism</keyword>
<keyword id="KW-0678">Repressor</keyword>
<keyword id="KW-0804">Transcription</keyword>
<keyword id="KW-0805">Transcription regulation</keyword>
<gene>
    <name evidence="1" type="primary">fadR</name>
    <name type="ordered locus">EFER_1768</name>
</gene>
<comment type="function">
    <text evidence="1">Multifunctional regulator of fatty acid metabolism.</text>
</comment>
<comment type="subunit">
    <text evidence="1">Homodimer.</text>
</comment>
<comment type="subcellular location">
    <subcellularLocation>
        <location evidence="1">Cytoplasm</location>
    </subcellularLocation>
</comment>
<protein>
    <recommendedName>
        <fullName evidence="1">Fatty acid metabolism regulator protein</fullName>
    </recommendedName>
</protein>
<evidence type="ECO:0000255" key="1">
    <source>
        <dbReference type="HAMAP-Rule" id="MF_00696"/>
    </source>
</evidence>
<organism>
    <name type="scientific">Escherichia fergusonii (strain ATCC 35469 / DSM 13698 / CCUG 18766 / IAM 14443 / JCM 21226 / LMG 7866 / NBRC 102419 / NCTC 12128 / CDC 0568-73)</name>
    <dbReference type="NCBI Taxonomy" id="585054"/>
    <lineage>
        <taxon>Bacteria</taxon>
        <taxon>Pseudomonadati</taxon>
        <taxon>Pseudomonadota</taxon>
        <taxon>Gammaproteobacteria</taxon>
        <taxon>Enterobacterales</taxon>
        <taxon>Enterobacteriaceae</taxon>
        <taxon>Escherichia</taxon>
    </lineage>
</organism>
<name>FADR_ESCF3</name>
<accession>B7LSJ7</accession>
<feature type="chain" id="PRO_1000132321" description="Fatty acid metabolism regulator protein">
    <location>
        <begin position="1"/>
        <end position="239"/>
    </location>
</feature>
<feature type="domain" description="HTH gntR-type" evidence="1">
    <location>
        <begin position="6"/>
        <end position="74"/>
    </location>
</feature>
<feature type="DNA-binding region" description="H-T-H motif" evidence="1">
    <location>
        <begin position="34"/>
        <end position="53"/>
    </location>
</feature>
<reference key="1">
    <citation type="journal article" date="2009" name="PLoS Genet.">
        <title>Organised genome dynamics in the Escherichia coli species results in highly diverse adaptive paths.</title>
        <authorList>
            <person name="Touchon M."/>
            <person name="Hoede C."/>
            <person name="Tenaillon O."/>
            <person name="Barbe V."/>
            <person name="Baeriswyl S."/>
            <person name="Bidet P."/>
            <person name="Bingen E."/>
            <person name="Bonacorsi S."/>
            <person name="Bouchier C."/>
            <person name="Bouvet O."/>
            <person name="Calteau A."/>
            <person name="Chiapello H."/>
            <person name="Clermont O."/>
            <person name="Cruveiller S."/>
            <person name="Danchin A."/>
            <person name="Diard M."/>
            <person name="Dossat C."/>
            <person name="Karoui M.E."/>
            <person name="Frapy E."/>
            <person name="Garry L."/>
            <person name="Ghigo J.M."/>
            <person name="Gilles A.M."/>
            <person name="Johnson J."/>
            <person name="Le Bouguenec C."/>
            <person name="Lescat M."/>
            <person name="Mangenot S."/>
            <person name="Martinez-Jehanne V."/>
            <person name="Matic I."/>
            <person name="Nassif X."/>
            <person name="Oztas S."/>
            <person name="Petit M.A."/>
            <person name="Pichon C."/>
            <person name="Rouy Z."/>
            <person name="Ruf C.S."/>
            <person name="Schneider D."/>
            <person name="Tourret J."/>
            <person name="Vacherie B."/>
            <person name="Vallenet D."/>
            <person name="Medigue C."/>
            <person name="Rocha E.P.C."/>
            <person name="Denamur E."/>
        </authorList>
    </citation>
    <scope>NUCLEOTIDE SEQUENCE [LARGE SCALE GENOMIC DNA]</scope>
    <source>
        <strain>ATCC 35469 / DSM 13698 / BCRC 15582 / CCUG 18766 / IAM 14443 / JCM 21226 / LMG 7866 / NBRC 102419 / NCTC 12128 / CDC 0568-73</strain>
    </source>
</reference>
<proteinExistence type="inferred from homology"/>